<gene>
    <name type="ORF">B23G1.170</name>
    <name type="ORF">NCU01830</name>
</gene>
<proteinExistence type="inferred from homology"/>
<organism>
    <name type="scientific">Neurospora crassa (strain ATCC 24698 / 74-OR23-1A / CBS 708.71 / DSM 1257 / FGSC 987)</name>
    <dbReference type="NCBI Taxonomy" id="367110"/>
    <lineage>
        <taxon>Eukaryota</taxon>
        <taxon>Fungi</taxon>
        <taxon>Dikarya</taxon>
        <taxon>Ascomycota</taxon>
        <taxon>Pezizomycotina</taxon>
        <taxon>Sordariomycetes</taxon>
        <taxon>Sordariomycetidae</taxon>
        <taxon>Sordariales</taxon>
        <taxon>Sordariaceae</taxon>
        <taxon>Neurospora</taxon>
    </lineage>
</organism>
<evidence type="ECO:0000250" key="1"/>
<evidence type="ECO:0000255" key="2">
    <source>
        <dbReference type="PROSITE-ProRule" id="PRU01163"/>
    </source>
</evidence>
<evidence type="ECO:0000305" key="3"/>
<keyword id="KW-0223">Dioxygenase</keyword>
<keyword id="KW-0408">Iron</keyword>
<keyword id="KW-0479">Metal-binding</keyword>
<keyword id="KW-0560">Oxidoreductase</keyword>
<keyword id="KW-0585">Phenylalanine catabolism</keyword>
<keyword id="KW-1185">Reference proteome</keyword>
<keyword id="KW-0677">Repeat</keyword>
<keyword id="KW-0828">Tyrosine catabolism</keyword>
<sequence length="412" mass="46029">MSPSAISSEYSNCNGTPDYALQSSEVSNFNGYDHVTWWVGNAKQAASYYNTVFGFKTLAYRGLETGSRYFASYVVGNADVRFVFTSPIRSQKCLPEEEPISDADRKLLQECHEHLEKHGDAVKDVAFEVDNVDGVFHKAVAAGADVVQEPTTLTDKMHGSVRTAVIRTYGDTTHTLISRADYNGPFLPGFRTAAPSSATVQLPSVPLARIDHCVGNQDWNEMVSACAFYEQCLSFHRFWSVDDSQICTEFSALNSIVMASENNLVKMPINEPAPGKKKSQIEEYVVFNSGAGVQHIALLTPDIISTVSAMRARGVEFINVPSTYYDTIRQRLKTEKRGWELKEDLDTIQKLNILIDYDEGGYLLQLFTKPLMDRPTVFIEIIQRNNFEGFGAGNFKSLFEAIEREQAERGNL</sequence>
<accession>Q872T7</accession>
<accession>Q1K579</accession>
<protein>
    <recommendedName>
        <fullName>4-hydroxyphenylpyruvate dioxygenase</fullName>
        <shortName>4HPPD</shortName>
        <shortName>HPD</shortName>
        <shortName>HPPDase</shortName>
        <ecNumber>1.13.11.27</ecNumber>
    </recommendedName>
</protein>
<feature type="chain" id="PRO_0000088406" description="4-hydroxyphenylpyruvate dioxygenase">
    <location>
        <begin position="1"/>
        <end position="412"/>
    </location>
</feature>
<feature type="domain" description="VOC 1" evidence="2">
    <location>
        <begin position="31"/>
        <end position="179"/>
    </location>
</feature>
<feature type="domain" description="VOC 2" evidence="2">
    <location>
        <begin position="209"/>
        <end position="369"/>
    </location>
</feature>
<feature type="binding site" evidence="1">
    <location>
        <position position="212"/>
    </location>
    <ligand>
        <name>Fe cation</name>
        <dbReference type="ChEBI" id="CHEBI:24875"/>
    </ligand>
</feature>
<feature type="binding site" evidence="1">
    <location>
        <position position="295"/>
    </location>
    <ligand>
        <name>Fe cation</name>
        <dbReference type="ChEBI" id="CHEBI:24875"/>
    </ligand>
</feature>
<feature type="binding site" evidence="1">
    <location>
        <position position="380"/>
    </location>
    <ligand>
        <name>Fe cation</name>
        <dbReference type="ChEBI" id="CHEBI:24875"/>
    </ligand>
</feature>
<dbReference type="EC" id="1.13.11.27"/>
<dbReference type="EMBL" id="BX284754">
    <property type="protein sequence ID" value="CAD70479.1"/>
    <property type="molecule type" value="Genomic_DNA"/>
</dbReference>
<dbReference type="EMBL" id="CM002237">
    <property type="protein sequence ID" value="EAA27378.1"/>
    <property type="molecule type" value="Genomic_DNA"/>
</dbReference>
<dbReference type="RefSeq" id="XP_956614.1">
    <property type="nucleotide sequence ID" value="XM_951521.3"/>
</dbReference>
<dbReference type="SMR" id="Q872T7"/>
<dbReference type="STRING" id="367110.Q872T7"/>
<dbReference type="PaxDb" id="5141-EFNCRP00000001867"/>
<dbReference type="EnsemblFungi" id="EAA27378">
    <property type="protein sequence ID" value="EAA27378"/>
    <property type="gene ID" value="NCU01830"/>
</dbReference>
<dbReference type="GeneID" id="3872761"/>
<dbReference type="KEGG" id="ncr:NCU01830"/>
<dbReference type="VEuPathDB" id="FungiDB:NCU01830"/>
<dbReference type="HOGENOM" id="CLU_034004_3_1_1"/>
<dbReference type="InParanoid" id="Q872T7"/>
<dbReference type="OrthoDB" id="414569at2759"/>
<dbReference type="UniPathway" id="UPA00139">
    <property type="reaction ID" value="UER00362"/>
</dbReference>
<dbReference type="Proteomes" id="UP000001805">
    <property type="component" value="Chromosome 6, Linkage Group II"/>
</dbReference>
<dbReference type="GO" id="GO:0003868">
    <property type="term" value="F:4-hydroxyphenylpyruvate dioxygenase activity"/>
    <property type="evidence" value="ECO:0000318"/>
    <property type="project" value="GO_Central"/>
</dbReference>
<dbReference type="GO" id="GO:0046872">
    <property type="term" value="F:metal ion binding"/>
    <property type="evidence" value="ECO:0007669"/>
    <property type="project" value="UniProtKB-KW"/>
</dbReference>
<dbReference type="GO" id="GO:0006559">
    <property type="term" value="P:L-phenylalanine catabolic process"/>
    <property type="evidence" value="ECO:0007669"/>
    <property type="project" value="UniProtKB-UniPathway"/>
</dbReference>
<dbReference type="GO" id="GO:0006572">
    <property type="term" value="P:tyrosine catabolic process"/>
    <property type="evidence" value="ECO:0000318"/>
    <property type="project" value="GO_Central"/>
</dbReference>
<dbReference type="CDD" id="cd07250">
    <property type="entry name" value="HPPD_C_like"/>
    <property type="match status" value="1"/>
</dbReference>
<dbReference type="CDD" id="cd08342">
    <property type="entry name" value="HPPD_N_like"/>
    <property type="match status" value="1"/>
</dbReference>
<dbReference type="FunFam" id="3.10.180.10:FF:000001">
    <property type="entry name" value="4-hydroxyphenylpyruvate dioxygenase"/>
    <property type="match status" value="1"/>
</dbReference>
<dbReference type="FunFam" id="3.10.180.10:FF:000020">
    <property type="entry name" value="4-hydroxyphenylpyruvate dioxygenase"/>
    <property type="match status" value="1"/>
</dbReference>
<dbReference type="Gene3D" id="3.10.180.10">
    <property type="entry name" value="2,3-Dihydroxybiphenyl 1,2-Dioxygenase, domain 1"/>
    <property type="match status" value="2"/>
</dbReference>
<dbReference type="InterPro" id="IPR005956">
    <property type="entry name" value="4OHPhenylPyrv_dOase"/>
</dbReference>
<dbReference type="InterPro" id="IPR041735">
    <property type="entry name" value="4OHPhenylPyrv_dOase_C"/>
</dbReference>
<dbReference type="InterPro" id="IPR041736">
    <property type="entry name" value="4OHPhenylPyrv_dOase_N"/>
</dbReference>
<dbReference type="InterPro" id="IPR029068">
    <property type="entry name" value="Glyas_Bleomycin-R_OHBP_Dase"/>
</dbReference>
<dbReference type="InterPro" id="IPR004360">
    <property type="entry name" value="Glyas_Fos-R_dOase_dom"/>
</dbReference>
<dbReference type="InterPro" id="IPR037523">
    <property type="entry name" value="VOC"/>
</dbReference>
<dbReference type="NCBIfam" id="TIGR01263">
    <property type="entry name" value="4HPPD"/>
    <property type="match status" value="1"/>
</dbReference>
<dbReference type="PANTHER" id="PTHR11959">
    <property type="entry name" value="4-HYDROXYPHENYLPYRUVATE DIOXYGENASE"/>
    <property type="match status" value="1"/>
</dbReference>
<dbReference type="PANTHER" id="PTHR11959:SF1">
    <property type="entry name" value="4-HYDROXYPHENYLPYRUVATE DIOXYGENASE"/>
    <property type="match status" value="1"/>
</dbReference>
<dbReference type="Pfam" id="PF00903">
    <property type="entry name" value="Glyoxalase"/>
    <property type="match status" value="2"/>
</dbReference>
<dbReference type="PIRSF" id="PIRSF009283">
    <property type="entry name" value="HPP_dOase"/>
    <property type="match status" value="1"/>
</dbReference>
<dbReference type="SUPFAM" id="SSF54593">
    <property type="entry name" value="Glyoxalase/Bleomycin resistance protein/Dihydroxybiphenyl dioxygenase"/>
    <property type="match status" value="1"/>
</dbReference>
<dbReference type="PROSITE" id="PS51819">
    <property type="entry name" value="VOC"/>
    <property type="match status" value="2"/>
</dbReference>
<comment type="catalytic activity">
    <reaction>
        <text>3-(4-hydroxyphenyl)pyruvate + O2 = homogentisate + CO2</text>
        <dbReference type="Rhea" id="RHEA:16189"/>
        <dbReference type="ChEBI" id="CHEBI:15379"/>
        <dbReference type="ChEBI" id="CHEBI:16169"/>
        <dbReference type="ChEBI" id="CHEBI:16526"/>
        <dbReference type="ChEBI" id="CHEBI:36242"/>
        <dbReference type="EC" id="1.13.11.27"/>
    </reaction>
</comment>
<comment type="cofactor">
    <cofactor evidence="1">
        <name>Fe cation</name>
        <dbReference type="ChEBI" id="CHEBI:24875"/>
    </cofactor>
    <text evidence="1">Binds 1 Fe cation per subunit.</text>
</comment>
<comment type="pathway">
    <text>Amino-acid degradation; L-phenylalanine degradation; acetoacetate and fumarate from L-phenylalanine: step 3/6.</text>
</comment>
<comment type="similarity">
    <text evidence="3">Belongs to the 4HPPD family.</text>
</comment>
<name>HPPD_NEUCR</name>
<reference key="1">
    <citation type="journal article" date="2003" name="Nucleic Acids Res.">
        <title>What's in the genome of a filamentous fungus? Analysis of the Neurospora genome sequence.</title>
        <authorList>
            <person name="Mannhaupt G."/>
            <person name="Montrone C."/>
            <person name="Haase D."/>
            <person name="Mewes H.-W."/>
            <person name="Aign V."/>
            <person name="Hoheisel J.D."/>
            <person name="Fartmann B."/>
            <person name="Nyakatura G."/>
            <person name="Kempken F."/>
            <person name="Maier J."/>
            <person name="Schulte U."/>
        </authorList>
    </citation>
    <scope>NUCLEOTIDE SEQUENCE [LARGE SCALE GENOMIC DNA]</scope>
    <source>
        <strain>ATCC 24698 / 74-OR23-1A / CBS 708.71 / DSM 1257 / FGSC 987</strain>
    </source>
</reference>
<reference key="2">
    <citation type="journal article" date="2003" name="Nature">
        <title>The genome sequence of the filamentous fungus Neurospora crassa.</title>
        <authorList>
            <person name="Galagan J.E."/>
            <person name="Calvo S.E."/>
            <person name="Borkovich K.A."/>
            <person name="Selker E.U."/>
            <person name="Read N.D."/>
            <person name="Jaffe D.B."/>
            <person name="FitzHugh W."/>
            <person name="Ma L.-J."/>
            <person name="Smirnov S."/>
            <person name="Purcell S."/>
            <person name="Rehman B."/>
            <person name="Elkins T."/>
            <person name="Engels R."/>
            <person name="Wang S."/>
            <person name="Nielsen C.B."/>
            <person name="Butler J."/>
            <person name="Endrizzi M."/>
            <person name="Qui D."/>
            <person name="Ianakiev P."/>
            <person name="Bell-Pedersen D."/>
            <person name="Nelson M.A."/>
            <person name="Werner-Washburne M."/>
            <person name="Selitrennikoff C.P."/>
            <person name="Kinsey J.A."/>
            <person name="Braun E.L."/>
            <person name="Zelter A."/>
            <person name="Schulte U."/>
            <person name="Kothe G.O."/>
            <person name="Jedd G."/>
            <person name="Mewes H.-W."/>
            <person name="Staben C."/>
            <person name="Marcotte E."/>
            <person name="Greenberg D."/>
            <person name="Roy A."/>
            <person name="Foley K."/>
            <person name="Naylor J."/>
            <person name="Stange-Thomann N."/>
            <person name="Barrett R."/>
            <person name="Gnerre S."/>
            <person name="Kamal M."/>
            <person name="Kamvysselis M."/>
            <person name="Mauceli E.W."/>
            <person name="Bielke C."/>
            <person name="Rudd S."/>
            <person name="Frishman D."/>
            <person name="Krystofova S."/>
            <person name="Rasmussen C."/>
            <person name="Metzenberg R.L."/>
            <person name="Perkins D.D."/>
            <person name="Kroken S."/>
            <person name="Cogoni C."/>
            <person name="Macino G."/>
            <person name="Catcheside D.E.A."/>
            <person name="Li W."/>
            <person name="Pratt R.J."/>
            <person name="Osmani S.A."/>
            <person name="DeSouza C.P.C."/>
            <person name="Glass N.L."/>
            <person name="Orbach M.J."/>
            <person name="Berglund J.A."/>
            <person name="Voelker R."/>
            <person name="Yarden O."/>
            <person name="Plamann M."/>
            <person name="Seiler S."/>
            <person name="Dunlap J.C."/>
            <person name="Radford A."/>
            <person name="Aramayo R."/>
            <person name="Natvig D.O."/>
            <person name="Alex L.A."/>
            <person name="Mannhaupt G."/>
            <person name="Ebbole D.J."/>
            <person name="Freitag M."/>
            <person name="Paulsen I."/>
            <person name="Sachs M.S."/>
            <person name="Lander E.S."/>
            <person name="Nusbaum C."/>
            <person name="Birren B.W."/>
        </authorList>
    </citation>
    <scope>NUCLEOTIDE SEQUENCE [LARGE SCALE GENOMIC DNA]</scope>
    <source>
        <strain>ATCC 24698 / 74-OR23-1A / CBS 708.71 / DSM 1257 / FGSC 987</strain>
    </source>
</reference>